<proteinExistence type="predicted"/>
<feature type="chain" id="PRO_0000169105" description="Uncharacterized protein YodD">
    <location>
        <begin position="1"/>
        <end position="75"/>
    </location>
</feature>
<accession>P64520</accession>
<accession>P76328</accession>
<reference key="1">
    <citation type="journal article" date="2002" name="Proc. Natl. Acad. Sci. U.S.A.">
        <title>Extensive mosaic structure revealed by the complete genome sequence of uropathogenic Escherichia coli.</title>
        <authorList>
            <person name="Welch R.A."/>
            <person name="Burland V."/>
            <person name="Plunkett G. III"/>
            <person name="Redford P."/>
            <person name="Roesch P."/>
            <person name="Rasko D."/>
            <person name="Buckles E.L."/>
            <person name="Liou S.-R."/>
            <person name="Boutin A."/>
            <person name="Hackett J."/>
            <person name="Stroud D."/>
            <person name="Mayhew G.F."/>
            <person name="Rose D.J."/>
            <person name="Zhou S."/>
            <person name="Schwartz D.C."/>
            <person name="Perna N.T."/>
            <person name="Mobley H.L.T."/>
            <person name="Donnenberg M.S."/>
            <person name="Blattner F.R."/>
        </authorList>
    </citation>
    <scope>NUCLEOTIDE SEQUENCE [LARGE SCALE GENOMIC DNA]</scope>
    <source>
        <strain>CFT073 / ATCC 700928 / UPEC</strain>
    </source>
</reference>
<protein>
    <recommendedName>
        <fullName>Uncharacterized protein YodD</fullName>
    </recommendedName>
</protein>
<name>YODD_ECOL6</name>
<keyword id="KW-1185">Reference proteome</keyword>
<dbReference type="EMBL" id="AE014075">
    <property type="protein sequence ID" value="AAN80831.1"/>
    <property type="status" value="ALT_INIT"/>
    <property type="molecule type" value="Genomic_DNA"/>
</dbReference>
<dbReference type="RefSeq" id="WP_000844800.1">
    <property type="nucleotide sequence ID" value="NZ_CP051263.1"/>
</dbReference>
<dbReference type="SMR" id="P64520"/>
<dbReference type="STRING" id="199310.c2372"/>
<dbReference type="GeneID" id="93775232"/>
<dbReference type="KEGG" id="ecc:c2372"/>
<dbReference type="eggNOG" id="ENOG5032W92">
    <property type="taxonomic scope" value="Bacteria"/>
</dbReference>
<dbReference type="HOGENOM" id="CLU_183590_0_0_6"/>
<dbReference type="Proteomes" id="UP000001410">
    <property type="component" value="Chromosome"/>
</dbReference>
<dbReference type="InterPro" id="IPR019669">
    <property type="entry name" value="Uncharacterised_YodD"/>
</dbReference>
<dbReference type="Pfam" id="PF10733">
    <property type="entry name" value="DUF2525"/>
    <property type="match status" value="1"/>
</dbReference>
<comment type="sequence caution" evidence="1">
    <conflict type="erroneous initiation">
        <sequence resource="EMBL-CDS" id="AAN80831"/>
    </conflict>
</comment>
<sequence length="75" mass="8579">MKTAKEYSDTAKREVSVDVDALLAAINEISESEVHRSQNDSEHVSVDGREYHTWRELADAFELDIHDFSVSEVNR</sequence>
<organism>
    <name type="scientific">Escherichia coli O6:H1 (strain CFT073 / ATCC 700928 / UPEC)</name>
    <dbReference type="NCBI Taxonomy" id="199310"/>
    <lineage>
        <taxon>Bacteria</taxon>
        <taxon>Pseudomonadati</taxon>
        <taxon>Pseudomonadota</taxon>
        <taxon>Gammaproteobacteria</taxon>
        <taxon>Enterobacterales</taxon>
        <taxon>Enterobacteriaceae</taxon>
        <taxon>Escherichia</taxon>
    </lineage>
</organism>
<gene>
    <name type="primary">yodD</name>
    <name type="ordered locus">c2372</name>
</gene>
<evidence type="ECO:0000305" key="1"/>